<name>ACDH_BURP0</name>
<proteinExistence type="inferred from homology"/>
<evidence type="ECO:0000255" key="1">
    <source>
        <dbReference type="HAMAP-Rule" id="MF_01657"/>
    </source>
</evidence>
<reference key="1">
    <citation type="journal article" date="2010" name="Genome Biol. Evol.">
        <title>Continuing evolution of Burkholderia mallei through genome reduction and large-scale rearrangements.</title>
        <authorList>
            <person name="Losada L."/>
            <person name="Ronning C.M."/>
            <person name="DeShazer D."/>
            <person name="Woods D."/>
            <person name="Fedorova N."/>
            <person name="Kim H.S."/>
            <person name="Shabalina S.A."/>
            <person name="Pearson T.R."/>
            <person name="Brinkac L."/>
            <person name="Tan P."/>
            <person name="Nandi T."/>
            <person name="Crabtree J."/>
            <person name="Badger J."/>
            <person name="Beckstrom-Sternberg S."/>
            <person name="Saqib M."/>
            <person name="Schutzer S.E."/>
            <person name="Keim P."/>
            <person name="Nierman W.C."/>
        </authorList>
    </citation>
    <scope>NUCLEOTIDE SEQUENCE [LARGE SCALE GENOMIC DNA]</scope>
    <source>
        <strain>1106a</strain>
    </source>
</reference>
<keyword id="KW-0058">Aromatic hydrocarbons catabolism</keyword>
<keyword id="KW-0520">NAD</keyword>
<keyword id="KW-0560">Oxidoreductase</keyword>
<comment type="catalytic activity">
    <reaction evidence="1">
        <text>acetaldehyde + NAD(+) + CoA = acetyl-CoA + NADH + H(+)</text>
        <dbReference type="Rhea" id="RHEA:23288"/>
        <dbReference type="ChEBI" id="CHEBI:15343"/>
        <dbReference type="ChEBI" id="CHEBI:15378"/>
        <dbReference type="ChEBI" id="CHEBI:57287"/>
        <dbReference type="ChEBI" id="CHEBI:57288"/>
        <dbReference type="ChEBI" id="CHEBI:57540"/>
        <dbReference type="ChEBI" id="CHEBI:57945"/>
        <dbReference type="EC" id="1.2.1.10"/>
    </reaction>
</comment>
<comment type="similarity">
    <text evidence="1">Belongs to the acetaldehyde dehydrogenase family.</text>
</comment>
<feature type="chain" id="PRO_0000387635" description="Acetaldehyde dehydrogenase">
    <location>
        <begin position="1"/>
        <end position="297"/>
    </location>
</feature>
<feature type="active site" description="Acyl-thioester intermediate" evidence="1">
    <location>
        <position position="130"/>
    </location>
</feature>
<feature type="binding site" evidence="1">
    <location>
        <begin position="15"/>
        <end position="18"/>
    </location>
    <ligand>
        <name>NAD(+)</name>
        <dbReference type="ChEBI" id="CHEBI:57540"/>
    </ligand>
</feature>
<feature type="binding site" evidence="1">
    <location>
        <begin position="162"/>
        <end position="170"/>
    </location>
    <ligand>
        <name>NAD(+)</name>
        <dbReference type="ChEBI" id="CHEBI:57540"/>
    </ligand>
</feature>
<feature type="binding site" evidence="1">
    <location>
        <position position="272"/>
    </location>
    <ligand>
        <name>NAD(+)</name>
        <dbReference type="ChEBI" id="CHEBI:57540"/>
    </ligand>
</feature>
<accession>A3P826</accession>
<protein>
    <recommendedName>
        <fullName evidence="1">Acetaldehyde dehydrogenase</fullName>
        <ecNumber evidence="1">1.2.1.10</ecNumber>
    </recommendedName>
    <alternativeName>
        <fullName evidence="1">Acetaldehyde dehydrogenase [acetylating]</fullName>
    </alternativeName>
</protein>
<gene>
    <name type="ordered locus">BURPS1106A_A2455</name>
</gene>
<organism>
    <name type="scientific">Burkholderia pseudomallei (strain 1106a)</name>
    <dbReference type="NCBI Taxonomy" id="357348"/>
    <lineage>
        <taxon>Bacteria</taxon>
        <taxon>Pseudomonadati</taxon>
        <taxon>Pseudomonadota</taxon>
        <taxon>Betaproteobacteria</taxon>
        <taxon>Burkholderiales</taxon>
        <taxon>Burkholderiaceae</taxon>
        <taxon>Burkholderia</taxon>
        <taxon>pseudomallei group</taxon>
    </lineage>
</organism>
<dbReference type="EC" id="1.2.1.10" evidence="1"/>
<dbReference type="EMBL" id="CP000573">
    <property type="protein sequence ID" value="ABN95095.1"/>
    <property type="molecule type" value="Genomic_DNA"/>
</dbReference>
<dbReference type="RefSeq" id="WP_004529065.1">
    <property type="nucleotide sequence ID" value="NC_009078.1"/>
</dbReference>
<dbReference type="SMR" id="A3P826"/>
<dbReference type="KEGG" id="bpl:BURPS1106A_A2455"/>
<dbReference type="HOGENOM" id="CLU_062208_0_0_4"/>
<dbReference type="Proteomes" id="UP000006738">
    <property type="component" value="Chromosome II"/>
</dbReference>
<dbReference type="GO" id="GO:0008774">
    <property type="term" value="F:acetaldehyde dehydrogenase (acetylating) activity"/>
    <property type="evidence" value="ECO:0007669"/>
    <property type="project" value="UniProtKB-UniRule"/>
</dbReference>
<dbReference type="GO" id="GO:0051287">
    <property type="term" value="F:NAD binding"/>
    <property type="evidence" value="ECO:0007669"/>
    <property type="project" value="UniProtKB-UniRule"/>
</dbReference>
<dbReference type="GO" id="GO:0009056">
    <property type="term" value="P:catabolic process"/>
    <property type="evidence" value="ECO:0007669"/>
    <property type="project" value="UniProtKB-KW"/>
</dbReference>
<dbReference type="CDD" id="cd23933">
    <property type="entry name" value="ALDH_C"/>
    <property type="match status" value="1"/>
</dbReference>
<dbReference type="Gene3D" id="3.30.360.10">
    <property type="entry name" value="Dihydrodipicolinate Reductase, domain 2"/>
    <property type="match status" value="1"/>
</dbReference>
<dbReference type="Gene3D" id="3.40.50.720">
    <property type="entry name" value="NAD(P)-binding Rossmann-like Domain"/>
    <property type="match status" value="1"/>
</dbReference>
<dbReference type="HAMAP" id="MF_01657">
    <property type="entry name" value="Ac_ald_DH_ac"/>
    <property type="match status" value="1"/>
</dbReference>
<dbReference type="InterPro" id="IPR003361">
    <property type="entry name" value="Acetaldehyde_dehydrogenase"/>
</dbReference>
<dbReference type="InterPro" id="IPR015426">
    <property type="entry name" value="Acetylaldehyde_DH_C"/>
</dbReference>
<dbReference type="InterPro" id="IPR036291">
    <property type="entry name" value="NAD(P)-bd_dom_sf"/>
</dbReference>
<dbReference type="InterPro" id="IPR000534">
    <property type="entry name" value="Semialdehyde_DH_NAD-bd"/>
</dbReference>
<dbReference type="NCBIfam" id="TIGR03215">
    <property type="entry name" value="ac_ald_DH_ac"/>
    <property type="match status" value="1"/>
</dbReference>
<dbReference type="NCBIfam" id="NF006157">
    <property type="entry name" value="PRK08300.1"/>
    <property type="match status" value="1"/>
</dbReference>
<dbReference type="Pfam" id="PF09290">
    <property type="entry name" value="AcetDehyd-dimer"/>
    <property type="match status" value="1"/>
</dbReference>
<dbReference type="Pfam" id="PF01118">
    <property type="entry name" value="Semialdhyde_dh"/>
    <property type="match status" value="1"/>
</dbReference>
<dbReference type="PIRSF" id="PIRSF015689">
    <property type="entry name" value="Actaldh_dh_actl"/>
    <property type="match status" value="1"/>
</dbReference>
<dbReference type="SMART" id="SM00859">
    <property type="entry name" value="Semialdhyde_dh"/>
    <property type="match status" value="1"/>
</dbReference>
<dbReference type="SUPFAM" id="SSF55347">
    <property type="entry name" value="Glyceraldehyde-3-phosphate dehydrogenase-like, C-terminal domain"/>
    <property type="match status" value="1"/>
</dbReference>
<dbReference type="SUPFAM" id="SSF51735">
    <property type="entry name" value="NAD(P)-binding Rossmann-fold domains"/>
    <property type="match status" value="1"/>
</dbReference>
<sequence length="297" mass="32288">MKSKSSRTRVAILGSGSIGLDLMFKVKASEQFDLKFVVGRNANSDGLRLARSCNVETSSDGLDFLKAHEDAYDLVFDATSAAAHKVNNRFFSDAGKFVIDLTPAKVGRLCVPCINLDDMGAEQNVNLITCGGQASLPLAYALKQAVDEIDYLEVVSAIASRSAGIATRENIDEYMTTTEYALAKFSGAKKTKAILNINPAEPGVRMQTTLYAYARYRDFDRVRASVADMVEKVREYVPGYRLVVEPLESQGRITIGLTVRGRGDYLPEYAGNLDIINCAALAVASHRHATARLGATQ</sequence>